<organism>
    <name type="scientific">Arabidopsis thaliana</name>
    <name type="common">Mouse-ear cress</name>
    <dbReference type="NCBI Taxonomy" id="3702"/>
    <lineage>
        <taxon>Eukaryota</taxon>
        <taxon>Viridiplantae</taxon>
        <taxon>Streptophyta</taxon>
        <taxon>Embryophyta</taxon>
        <taxon>Tracheophyta</taxon>
        <taxon>Spermatophyta</taxon>
        <taxon>Magnoliopsida</taxon>
        <taxon>eudicotyledons</taxon>
        <taxon>Gunneridae</taxon>
        <taxon>Pentapetalae</taxon>
        <taxon>rosids</taxon>
        <taxon>malvids</taxon>
        <taxon>Brassicales</taxon>
        <taxon>Brassicaceae</taxon>
        <taxon>Camelineae</taxon>
        <taxon>Arabidopsis</taxon>
    </lineage>
</organism>
<reference key="1">
    <citation type="journal article" date="1998" name="Nature">
        <title>Analysis of 1.9 Mb of contiguous sequence from chromosome 4 of Arabidopsis thaliana.</title>
        <authorList>
            <person name="Bevan M."/>
            <person name="Bancroft I."/>
            <person name="Bent E."/>
            <person name="Love K."/>
            <person name="Goodman H.M."/>
            <person name="Dean C."/>
            <person name="Bergkamp R."/>
            <person name="Dirkse W."/>
            <person name="van Staveren M."/>
            <person name="Stiekema W."/>
            <person name="Drost L."/>
            <person name="Ridley P."/>
            <person name="Hudson S.-A."/>
            <person name="Patel K."/>
            <person name="Murphy G."/>
            <person name="Piffanelli P."/>
            <person name="Wedler H."/>
            <person name="Wedler E."/>
            <person name="Wambutt R."/>
            <person name="Weitzenegger T."/>
            <person name="Pohl T."/>
            <person name="Terryn N."/>
            <person name="Gielen J."/>
            <person name="Villarroel R."/>
            <person name="De Clercq R."/>
            <person name="van Montagu M."/>
            <person name="Lecharny A."/>
            <person name="Aubourg S."/>
            <person name="Gy I."/>
            <person name="Kreis M."/>
            <person name="Lao N."/>
            <person name="Kavanagh T."/>
            <person name="Hempel S."/>
            <person name="Kotter P."/>
            <person name="Entian K.-D."/>
            <person name="Rieger M."/>
            <person name="Schaefer M."/>
            <person name="Funk B."/>
            <person name="Mueller-Auer S."/>
            <person name="Silvey M."/>
            <person name="James R."/>
            <person name="Monfort A."/>
            <person name="Pons A."/>
            <person name="Puigdomenech P."/>
            <person name="Douka A."/>
            <person name="Voukelatou E."/>
            <person name="Milioni D."/>
            <person name="Hatzopoulos P."/>
            <person name="Piravandi E."/>
            <person name="Obermaier B."/>
            <person name="Hilbert H."/>
            <person name="Duesterhoeft A."/>
            <person name="Moores T."/>
            <person name="Jones J.D.G."/>
            <person name="Eneva T."/>
            <person name="Palme K."/>
            <person name="Benes V."/>
            <person name="Rechmann S."/>
            <person name="Ansorge W."/>
            <person name="Cooke R."/>
            <person name="Berger C."/>
            <person name="Delseny M."/>
            <person name="Voet M."/>
            <person name="Volckaert G."/>
            <person name="Mewes H.-W."/>
            <person name="Klosterman S."/>
            <person name="Schueller C."/>
            <person name="Chalwatzis N."/>
        </authorList>
    </citation>
    <scope>NUCLEOTIDE SEQUENCE [LARGE SCALE GENOMIC DNA]</scope>
    <source>
        <strain>cv. Columbia</strain>
    </source>
</reference>
<reference key="2">
    <citation type="journal article" date="1999" name="Nature">
        <title>Sequence and analysis of chromosome 4 of the plant Arabidopsis thaliana.</title>
        <authorList>
            <person name="Mayer K.F.X."/>
            <person name="Schueller C."/>
            <person name="Wambutt R."/>
            <person name="Murphy G."/>
            <person name="Volckaert G."/>
            <person name="Pohl T."/>
            <person name="Duesterhoeft A."/>
            <person name="Stiekema W."/>
            <person name="Entian K.-D."/>
            <person name="Terryn N."/>
            <person name="Harris B."/>
            <person name="Ansorge W."/>
            <person name="Brandt P."/>
            <person name="Grivell L.A."/>
            <person name="Rieger M."/>
            <person name="Weichselgartner M."/>
            <person name="de Simone V."/>
            <person name="Obermaier B."/>
            <person name="Mache R."/>
            <person name="Mueller M."/>
            <person name="Kreis M."/>
            <person name="Delseny M."/>
            <person name="Puigdomenech P."/>
            <person name="Watson M."/>
            <person name="Schmidtheini T."/>
            <person name="Reichert B."/>
            <person name="Portetelle D."/>
            <person name="Perez-Alonso M."/>
            <person name="Boutry M."/>
            <person name="Bancroft I."/>
            <person name="Vos P."/>
            <person name="Hoheisel J."/>
            <person name="Zimmermann W."/>
            <person name="Wedler H."/>
            <person name="Ridley P."/>
            <person name="Langham S.-A."/>
            <person name="McCullagh B."/>
            <person name="Bilham L."/>
            <person name="Robben J."/>
            <person name="van der Schueren J."/>
            <person name="Grymonprez B."/>
            <person name="Chuang Y.-J."/>
            <person name="Vandenbussche F."/>
            <person name="Braeken M."/>
            <person name="Weltjens I."/>
            <person name="Voet M."/>
            <person name="Bastiaens I."/>
            <person name="Aert R."/>
            <person name="Defoor E."/>
            <person name="Weitzenegger T."/>
            <person name="Bothe G."/>
            <person name="Ramsperger U."/>
            <person name="Hilbert H."/>
            <person name="Braun M."/>
            <person name="Holzer E."/>
            <person name="Brandt A."/>
            <person name="Peters S."/>
            <person name="van Staveren M."/>
            <person name="Dirkse W."/>
            <person name="Mooijman P."/>
            <person name="Klein Lankhorst R."/>
            <person name="Rose M."/>
            <person name="Hauf J."/>
            <person name="Koetter P."/>
            <person name="Berneiser S."/>
            <person name="Hempel S."/>
            <person name="Feldpausch M."/>
            <person name="Lamberth S."/>
            <person name="Van den Daele H."/>
            <person name="De Keyser A."/>
            <person name="Buysshaert C."/>
            <person name="Gielen J."/>
            <person name="Villarroel R."/>
            <person name="De Clercq R."/>
            <person name="van Montagu M."/>
            <person name="Rogers J."/>
            <person name="Cronin A."/>
            <person name="Quail M.A."/>
            <person name="Bray-Allen S."/>
            <person name="Clark L."/>
            <person name="Doggett J."/>
            <person name="Hall S."/>
            <person name="Kay M."/>
            <person name="Lennard N."/>
            <person name="McLay K."/>
            <person name="Mayes R."/>
            <person name="Pettett A."/>
            <person name="Rajandream M.A."/>
            <person name="Lyne M."/>
            <person name="Benes V."/>
            <person name="Rechmann S."/>
            <person name="Borkova D."/>
            <person name="Bloecker H."/>
            <person name="Scharfe M."/>
            <person name="Grimm M."/>
            <person name="Loehnert T.-H."/>
            <person name="Dose S."/>
            <person name="de Haan M."/>
            <person name="Maarse A.C."/>
            <person name="Schaefer M."/>
            <person name="Mueller-Auer S."/>
            <person name="Gabel C."/>
            <person name="Fuchs M."/>
            <person name="Fartmann B."/>
            <person name="Granderath K."/>
            <person name="Dauner D."/>
            <person name="Herzl A."/>
            <person name="Neumann S."/>
            <person name="Argiriou A."/>
            <person name="Vitale D."/>
            <person name="Liguori R."/>
            <person name="Piravandi E."/>
            <person name="Massenet O."/>
            <person name="Quigley F."/>
            <person name="Clabauld G."/>
            <person name="Muendlein A."/>
            <person name="Felber R."/>
            <person name="Schnabl S."/>
            <person name="Hiller R."/>
            <person name="Schmidt W."/>
            <person name="Lecharny A."/>
            <person name="Aubourg S."/>
            <person name="Chefdor F."/>
            <person name="Cooke R."/>
            <person name="Berger C."/>
            <person name="Monfort A."/>
            <person name="Casacuberta E."/>
            <person name="Gibbons T."/>
            <person name="Weber N."/>
            <person name="Vandenbol M."/>
            <person name="Bargues M."/>
            <person name="Terol J."/>
            <person name="Torres A."/>
            <person name="Perez-Perez A."/>
            <person name="Purnelle B."/>
            <person name="Bent E."/>
            <person name="Johnson S."/>
            <person name="Tacon D."/>
            <person name="Jesse T."/>
            <person name="Heijnen L."/>
            <person name="Schwarz S."/>
            <person name="Scholler P."/>
            <person name="Heber S."/>
            <person name="Francs P."/>
            <person name="Bielke C."/>
            <person name="Frishman D."/>
            <person name="Haase D."/>
            <person name="Lemcke K."/>
            <person name="Mewes H.-W."/>
            <person name="Stocker S."/>
            <person name="Zaccaria P."/>
            <person name="Bevan M."/>
            <person name="Wilson R.K."/>
            <person name="de la Bastide M."/>
            <person name="Habermann K."/>
            <person name="Parnell L."/>
            <person name="Dedhia N."/>
            <person name="Gnoj L."/>
            <person name="Schutz K."/>
            <person name="Huang E."/>
            <person name="Spiegel L."/>
            <person name="Sekhon M."/>
            <person name="Murray J."/>
            <person name="Sheet P."/>
            <person name="Cordes M."/>
            <person name="Abu-Threideh J."/>
            <person name="Stoneking T."/>
            <person name="Kalicki J."/>
            <person name="Graves T."/>
            <person name="Harmon G."/>
            <person name="Edwards J."/>
            <person name="Latreille P."/>
            <person name="Courtney L."/>
            <person name="Cloud J."/>
            <person name="Abbott A."/>
            <person name="Scott K."/>
            <person name="Johnson D."/>
            <person name="Minx P."/>
            <person name="Bentley D."/>
            <person name="Fulton B."/>
            <person name="Miller N."/>
            <person name="Greco T."/>
            <person name="Kemp K."/>
            <person name="Kramer J."/>
            <person name="Fulton L."/>
            <person name="Mardis E."/>
            <person name="Dante M."/>
            <person name="Pepin K."/>
            <person name="Hillier L.W."/>
            <person name="Nelson J."/>
            <person name="Spieth J."/>
            <person name="Ryan E."/>
            <person name="Andrews S."/>
            <person name="Geisel C."/>
            <person name="Layman D."/>
            <person name="Du H."/>
            <person name="Ali J."/>
            <person name="Berghoff A."/>
            <person name="Jones K."/>
            <person name="Drone K."/>
            <person name="Cotton M."/>
            <person name="Joshu C."/>
            <person name="Antonoiu B."/>
            <person name="Zidanic M."/>
            <person name="Strong C."/>
            <person name="Sun H."/>
            <person name="Lamar B."/>
            <person name="Yordan C."/>
            <person name="Ma P."/>
            <person name="Zhong J."/>
            <person name="Preston R."/>
            <person name="Vil D."/>
            <person name="Shekher M."/>
            <person name="Matero A."/>
            <person name="Shah R."/>
            <person name="Swaby I.K."/>
            <person name="O'Shaughnessy A."/>
            <person name="Rodriguez M."/>
            <person name="Hoffman J."/>
            <person name="Till S."/>
            <person name="Granat S."/>
            <person name="Shohdy N."/>
            <person name="Hasegawa A."/>
            <person name="Hameed A."/>
            <person name="Lodhi M."/>
            <person name="Johnson A."/>
            <person name="Chen E."/>
            <person name="Marra M.A."/>
            <person name="Martienssen R."/>
            <person name="McCombie W.R."/>
        </authorList>
    </citation>
    <scope>NUCLEOTIDE SEQUENCE [LARGE SCALE GENOMIC DNA]</scope>
    <source>
        <strain>cv. Columbia</strain>
    </source>
</reference>
<reference key="3">
    <citation type="journal article" date="2017" name="Plant J.">
        <title>Araport11: a complete reannotation of the Arabidopsis thaliana reference genome.</title>
        <authorList>
            <person name="Cheng C.Y."/>
            <person name="Krishnakumar V."/>
            <person name="Chan A.P."/>
            <person name="Thibaud-Nissen F."/>
            <person name="Schobel S."/>
            <person name="Town C.D."/>
        </authorList>
    </citation>
    <scope>GENOME REANNOTATION</scope>
    <source>
        <strain>cv. Columbia</strain>
    </source>
</reference>
<reference key="4">
    <citation type="journal article" date="2003" name="Science">
        <title>Empirical analysis of transcriptional activity in the Arabidopsis genome.</title>
        <authorList>
            <person name="Yamada K."/>
            <person name="Lim J."/>
            <person name="Dale J.M."/>
            <person name="Chen H."/>
            <person name="Shinn P."/>
            <person name="Palm C.J."/>
            <person name="Southwick A.M."/>
            <person name="Wu H.C."/>
            <person name="Kim C.J."/>
            <person name="Nguyen M."/>
            <person name="Pham P.K."/>
            <person name="Cheuk R.F."/>
            <person name="Karlin-Newmann G."/>
            <person name="Liu S.X."/>
            <person name="Lam B."/>
            <person name="Sakano H."/>
            <person name="Wu T."/>
            <person name="Yu G."/>
            <person name="Miranda M."/>
            <person name="Quach H.L."/>
            <person name="Tripp M."/>
            <person name="Chang C.H."/>
            <person name="Lee J.M."/>
            <person name="Toriumi M.J."/>
            <person name="Chan M.M."/>
            <person name="Tang C.C."/>
            <person name="Onodera C.S."/>
            <person name="Deng J.M."/>
            <person name="Akiyama K."/>
            <person name="Ansari Y."/>
            <person name="Arakawa T."/>
            <person name="Banh J."/>
            <person name="Banno F."/>
            <person name="Bowser L."/>
            <person name="Brooks S.Y."/>
            <person name="Carninci P."/>
            <person name="Chao Q."/>
            <person name="Choy N."/>
            <person name="Enju A."/>
            <person name="Goldsmith A.D."/>
            <person name="Gurjal M."/>
            <person name="Hansen N.F."/>
            <person name="Hayashizaki Y."/>
            <person name="Johnson-Hopson C."/>
            <person name="Hsuan V.W."/>
            <person name="Iida K."/>
            <person name="Karnes M."/>
            <person name="Khan S."/>
            <person name="Koesema E."/>
            <person name="Ishida J."/>
            <person name="Jiang P.X."/>
            <person name="Jones T."/>
            <person name="Kawai J."/>
            <person name="Kamiya A."/>
            <person name="Meyers C."/>
            <person name="Nakajima M."/>
            <person name="Narusaka M."/>
            <person name="Seki M."/>
            <person name="Sakurai T."/>
            <person name="Satou M."/>
            <person name="Tamse R."/>
            <person name="Vaysberg M."/>
            <person name="Wallender E.K."/>
            <person name="Wong C."/>
            <person name="Yamamura Y."/>
            <person name="Yuan S."/>
            <person name="Shinozaki K."/>
            <person name="Davis R.W."/>
            <person name="Theologis A."/>
            <person name="Ecker J.R."/>
        </authorList>
    </citation>
    <scope>NUCLEOTIDE SEQUENCE [LARGE SCALE MRNA]</scope>
    <source>
        <strain>cv. Columbia</strain>
    </source>
</reference>
<reference key="5">
    <citation type="journal article" date="2005" name="Plant Physiol.">
        <title>Phylogenomic analysis of the receptor-like proteins of rice and Arabidopsis.</title>
        <authorList>
            <person name="Fritz-Laylin L.K."/>
            <person name="Krishnamurthy N."/>
            <person name="Toer M."/>
            <person name="Sjoelander K.V."/>
            <person name="Jones J.D."/>
        </authorList>
    </citation>
    <scope>GENE FAMILY</scope>
</reference>
<reference key="6">
    <citation type="journal article" date="2008" name="Plant Physiol.">
        <title>A genome-wide functional investigation into the roles of receptor-like proteins in Arabidopsis.</title>
        <authorList>
            <person name="Wang G."/>
            <person name="Ellendorff U."/>
            <person name="Kemp B."/>
            <person name="Mansfield J.W."/>
            <person name="Forsyth A."/>
            <person name="Mitchell K."/>
            <person name="Bastas K."/>
            <person name="Liu C.-M."/>
            <person name="Woods-Toer A."/>
            <person name="Zipfel C."/>
            <person name="de Wit P.J.G.M."/>
            <person name="Jones J.D.G."/>
            <person name="Toer M."/>
            <person name="Thomma B.P.H.J."/>
        </authorList>
    </citation>
    <scope>GENE FAMILY</scope>
    <scope>NOMENCLATURE</scope>
    <source>
        <strain>cv. Columbia</strain>
    </source>
</reference>
<dbReference type="EMBL" id="Z97335">
    <property type="protein sequence ID" value="CAB10171.1"/>
    <property type="status" value="ALT_SEQ"/>
    <property type="molecule type" value="Genomic_DNA"/>
</dbReference>
<dbReference type="EMBL" id="AL161537">
    <property type="protein sequence ID" value="CAB78434.1"/>
    <property type="status" value="ALT_SEQ"/>
    <property type="molecule type" value="Genomic_DNA"/>
</dbReference>
<dbReference type="EMBL" id="CP002687">
    <property type="protein sequence ID" value="AEE83343.1"/>
    <property type="molecule type" value="Genomic_DNA"/>
</dbReference>
<dbReference type="EMBL" id="AY059776">
    <property type="protein sequence ID" value="AAL24124.1"/>
    <property type="molecule type" value="mRNA"/>
</dbReference>
<dbReference type="EMBL" id="AY091445">
    <property type="protein sequence ID" value="AAM14384.1"/>
    <property type="molecule type" value="mRNA"/>
</dbReference>
<dbReference type="PIR" id="A71400">
    <property type="entry name" value="A71400"/>
</dbReference>
<dbReference type="RefSeq" id="NP_567412.1">
    <property type="nucleotide sequence ID" value="NM_117466.2"/>
</dbReference>
<dbReference type="SMR" id="Q93YT3"/>
<dbReference type="STRING" id="3702.Q93YT3"/>
<dbReference type="GlyCosmos" id="Q93YT3">
    <property type="glycosylation" value="19 sites, No reported glycans"/>
</dbReference>
<dbReference type="GlyGen" id="Q93YT3">
    <property type="glycosylation" value="19 sites"/>
</dbReference>
<dbReference type="iPTMnet" id="Q93YT3"/>
<dbReference type="PaxDb" id="3702-AT4G13920.1"/>
<dbReference type="ProteomicsDB" id="228109"/>
<dbReference type="EnsemblPlants" id="AT4G13920.1">
    <property type="protein sequence ID" value="AT4G13920.1"/>
    <property type="gene ID" value="AT4G13920"/>
</dbReference>
<dbReference type="GeneID" id="827026"/>
<dbReference type="Gramene" id="AT4G13920.1">
    <property type="protein sequence ID" value="AT4G13920.1"/>
    <property type="gene ID" value="AT4G13920"/>
</dbReference>
<dbReference type="KEGG" id="ath:AT4G13920"/>
<dbReference type="Araport" id="AT4G13920"/>
<dbReference type="TAIR" id="AT4G13920">
    <property type="gene designation" value="RLP50"/>
</dbReference>
<dbReference type="eggNOG" id="KOG0619">
    <property type="taxonomic scope" value="Eukaryota"/>
</dbReference>
<dbReference type="HOGENOM" id="CLU_000288_18_3_1"/>
<dbReference type="InParanoid" id="Q93YT3"/>
<dbReference type="OMA" id="NAFREPF"/>
<dbReference type="PhylomeDB" id="Q93YT3"/>
<dbReference type="PRO" id="PR:Q93YT3"/>
<dbReference type="Proteomes" id="UP000006548">
    <property type="component" value="Chromosome 4"/>
</dbReference>
<dbReference type="ExpressionAtlas" id="Q93YT3">
    <property type="expression patterns" value="baseline and differential"/>
</dbReference>
<dbReference type="GO" id="GO:0005886">
    <property type="term" value="C:plasma membrane"/>
    <property type="evidence" value="ECO:0007669"/>
    <property type="project" value="UniProtKB-SubCell"/>
</dbReference>
<dbReference type="FunFam" id="3.80.10.10:FF:000041">
    <property type="entry name" value="LRR receptor-like serine/threonine-protein kinase ERECTA"/>
    <property type="match status" value="1"/>
</dbReference>
<dbReference type="FunFam" id="3.80.10.10:FF:000400">
    <property type="entry name" value="Nuclear pore complex protein NUP107"/>
    <property type="match status" value="1"/>
</dbReference>
<dbReference type="FunFam" id="3.80.10.10:FF:000213">
    <property type="entry name" value="Tyrosine-sulfated glycopeptide receptor 1"/>
    <property type="match status" value="1"/>
</dbReference>
<dbReference type="Gene3D" id="3.80.10.10">
    <property type="entry name" value="Ribonuclease Inhibitor"/>
    <property type="match status" value="5"/>
</dbReference>
<dbReference type="InterPro" id="IPR001611">
    <property type="entry name" value="Leu-rich_rpt"/>
</dbReference>
<dbReference type="InterPro" id="IPR003591">
    <property type="entry name" value="Leu-rich_rpt_typical-subtyp"/>
</dbReference>
<dbReference type="InterPro" id="IPR032675">
    <property type="entry name" value="LRR_dom_sf"/>
</dbReference>
<dbReference type="InterPro" id="IPR013210">
    <property type="entry name" value="LRR_N_plant-typ"/>
</dbReference>
<dbReference type="InterPro" id="IPR055414">
    <property type="entry name" value="LRR_R13L4/SHOC2-like"/>
</dbReference>
<dbReference type="InterPro" id="IPR046956">
    <property type="entry name" value="RLP23-like"/>
</dbReference>
<dbReference type="PANTHER" id="PTHR48063">
    <property type="entry name" value="LRR RECEPTOR-LIKE KINASE"/>
    <property type="match status" value="1"/>
</dbReference>
<dbReference type="PANTHER" id="PTHR48063:SF112">
    <property type="entry name" value="RECEPTOR LIKE PROTEIN 30-LIKE"/>
    <property type="match status" value="1"/>
</dbReference>
<dbReference type="Pfam" id="PF00560">
    <property type="entry name" value="LRR_1"/>
    <property type="match status" value="4"/>
</dbReference>
<dbReference type="Pfam" id="PF23598">
    <property type="entry name" value="LRR_14"/>
    <property type="match status" value="2"/>
</dbReference>
<dbReference type="Pfam" id="PF13855">
    <property type="entry name" value="LRR_8"/>
    <property type="match status" value="2"/>
</dbReference>
<dbReference type="Pfam" id="PF08263">
    <property type="entry name" value="LRRNT_2"/>
    <property type="match status" value="1"/>
</dbReference>
<dbReference type="PRINTS" id="PR00019">
    <property type="entry name" value="LEURICHRPT"/>
</dbReference>
<dbReference type="SMART" id="SM00369">
    <property type="entry name" value="LRR_TYP"/>
    <property type="match status" value="6"/>
</dbReference>
<dbReference type="SUPFAM" id="SSF52058">
    <property type="entry name" value="L domain-like"/>
    <property type="match status" value="3"/>
</dbReference>
<dbReference type="PROSITE" id="PS51450">
    <property type="entry name" value="LRR"/>
    <property type="match status" value="16"/>
</dbReference>
<proteinExistence type="evidence at transcript level"/>
<name>RLP50_ARATH</name>
<comment type="subcellular location">
    <subcellularLocation>
        <location evidence="4">Cell membrane</location>
        <topology evidence="4">Single-pass type I membrane protein</topology>
    </subcellularLocation>
</comment>
<comment type="similarity">
    <text evidence="4">Belongs to the RLP family.</text>
</comment>
<comment type="sequence caution" evidence="4">
    <conflict type="erroneous gene model prediction">
        <sequence resource="EMBL-CDS" id="CAB10171"/>
    </conflict>
</comment>
<comment type="sequence caution" evidence="4">
    <conflict type="erroneous gene model prediction">
        <sequence resource="EMBL-CDS" id="CAB78434"/>
    </conflict>
</comment>
<keyword id="KW-1003">Cell membrane</keyword>
<keyword id="KW-0325">Glycoprotein</keyword>
<keyword id="KW-0433">Leucine-rich repeat</keyword>
<keyword id="KW-0472">Membrane</keyword>
<keyword id="KW-0675">Receptor</keyword>
<keyword id="KW-1185">Reference proteome</keyword>
<keyword id="KW-0677">Repeat</keyword>
<keyword id="KW-0732">Signal</keyword>
<keyword id="KW-0812">Transmembrane</keyword>
<keyword id="KW-1133">Transmembrane helix</keyword>
<feature type="signal peptide" evidence="1">
    <location>
        <begin position="1"/>
        <end position="22"/>
    </location>
</feature>
<feature type="chain" id="PRO_5011950530" description="Receptor-like protein 50">
    <location>
        <begin position="23"/>
        <end position="891"/>
    </location>
</feature>
<feature type="topological domain" description="Extracellular" evidence="1">
    <location>
        <begin position="23"/>
        <end position="849"/>
    </location>
</feature>
<feature type="transmembrane region" description="Helical" evidence="1">
    <location>
        <begin position="850"/>
        <end position="870"/>
    </location>
</feature>
<feature type="topological domain" description="Cytoplasmic" evidence="1">
    <location>
        <begin position="871"/>
        <end position="891"/>
    </location>
</feature>
<feature type="repeat" description="LRR 1" evidence="1">
    <location>
        <begin position="105"/>
        <end position="130"/>
    </location>
</feature>
<feature type="repeat" description="LRR 2" evidence="1">
    <location>
        <begin position="132"/>
        <end position="152"/>
    </location>
</feature>
<feature type="repeat" description="LRR 3" evidence="1">
    <location>
        <begin position="153"/>
        <end position="176"/>
    </location>
</feature>
<feature type="repeat" description="LRR 4" evidence="1">
    <location>
        <begin position="177"/>
        <end position="201"/>
    </location>
</feature>
<feature type="repeat" description="LRR 5" evidence="1">
    <location>
        <begin position="203"/>
        <end position="225"/>
    </location>
</feature>
<feature type="repeat" description="LRR 6" evidence="1">
    <location>
        <begin position="226"/>
        <end position="249"/>
    </location>
</feature>
<feature type="repeat" description="LRR 7" evidence="1">
    <location>
        <begin position="250"/>
        <end position="272"/>
    </location>
</feature>
<feature type="repeat" description="LRR 8" evidence="1">
    <location>
        <begin position="286"/>
        <end position="309"/>
    </location>
</feature>
<feature type="repeat" description="LRR 9" evidence="1">
    <location>
        <begin position="310"/>
        <end position="334"/>
    </location>
</feature>
<feature type="repeat" description="LRR 10" evidence="1">
    <location>
        <begin position="336"/>
        <end position="358"/>
    </location>
</feature>
<feature type="repeat" description="LRR 11" evidence="1">
    <location>
        <begin position="359"/>
        <end position="383"/>
    </location>
</feature>
<feature type="repeat" description="LRR 12; degenerate" evidence="4">
    <location>
        <begin position="384"/>
        <end position="407"/>
    </location>
</feature>
<feature type="repeat" description="LRR 13" evidence="1">
    <location>
        <begin position="408"/>
        <end position="436"/>
    </location>
</feature>
<feature type="repeat" description="LRR 14" evidence="1">
    <location>
        <begin position="438"/>
        <end position="453"/>
    </location>
</feature>
<feature type="repeat" description="LRR 15" evidence="1">
    <location>
        <begin position="454"/>
        <end position="477"/>
    </location>
</feature>
<feature type="repeat" description="LRR 16" evidence="1">
    <location>
        <begin position="478"/>
        <end position="504"/>
    </location>
</feature>
<feature type="repeat" description="LRR 17" evidence="1">
    <location>
        <begin position="506"/>
        <end position="519"/>
    </location>
</feature>
<feature type="repeat" description="LRR 18" evidence="1">
    <location>
        <begin position="520"/>
        <end position="544"/>
    </location>
</feature>
<feature type="repeat" description="LRR 19" evidence="1">
    <location>
        <begin position="545"/>
        <end position="568"/>
    </location>
</feature>
<feature type="repeat" description="LRR 20" evidence="1">
    <location>
        <begin position="570"/>
        <end position="591"/>
    </location>
</feature>
<feature type="repeat" description="LRR 21" evidence="1">
    <location>
        <begin position="593"/>
        <end position="614"/>
    </location>
</feature>
<feature type="repeat" description="LRR 22" evidence="1">
    <location>
        <begin position="615"/>
        <end position="641"/>
    </location>
</feature>
<feature type="repeat" description="LRR 23" evidence="1">
    <location>
        <begin position="642"/>
        <end position="665"/>
    </location>
</feature>
<feature type="repeat" description="LRR 24" evidence="1">
    <location>
        <begin position="712"/>
        <end position="736"/>
    </location>
</feature>
<feature type="repeat" description="LRR 25" evidence="1">
    <location>
        <begin position="737"/>
        <end position="760"/>
    </location>
</feature>
<feature type="repeat" description="LRR 26" evidence="1">
    <location>
        <begin position="761"/>
        <end position="784"/>
    </location>
</feature>
<feature type="repeat" description="LRR 27" evidence="1">
    <location>
        <begin position="786"/>
        <end position="809"/>
    </location>
</feature>
<feature type="glycosylation site" description="N-linked (GlcNAc...) asparagine" evidence="2">
    <location>
        <position position="62"/>
    </location>
</feature>
<feature type="glycosylation site" description="N-linked (GlcNAc...) asparagine" evidence="2">
    <location>
        <position position="98"/>
    </location>
</feature>
<feature type="glycosylation site" description="N-linked (GlcNAc...) asparagine" evidence="2">
    <location>
        <position position="200"/>
    </location>
</feature>
<feature type="glycosylation site" description="N-linked (GlcNAc...) asparagine" evidence="2">
    <location>
        <position position="251"/>
    </location>
</feature>
<feature type="glycosylation site" description="N-linked (GlcNAc...) asparagine" evidence="2">
    <location>
        <position position="285"/>
    </location>
</feature>
<feature type="glycosylation site" description="N-linked (GlcNAc...) asparagine" evidence="2">
    <location>
        <position position="306"/>
    </location>
</feature>
<feature type="glycosylation site" description="N-linked (GlcNAc...) asparagine" evidence="2">
    <location>
        <position position="355"/>
    </location>
</feature>
<feature type="glycosylation site" description="N-linked (GlcNAc...) asparagine" evidence="2">
    <location>
        <position position="422"/>
    </location>
</feature>
<feature type="glycosylation site" description="N-linked (GlcNAc...) asparagine" evidence="2">
    <location>
        <position position="442"/>
    </location>
</feature>
<feature type="glycosylation site" description="N-linked (GlcNAc...) asparagine" evidence="2">
    <location>
        <position position="452"/>
    </location>
</feature>
<feature type="glycosylation site" description="N-linked (GlcNAc...) asparagine" evidence="2">
    <location>
        <position position="531"/>
    </location>
</feature>
<feature type="glycosylation site" description="N-linked (GlcNAc...) asparagine" evidence="2">
    <location>
        <position position="544"/>
    </location>
</feature>
<feature type="glycosylation site" description="N-linked (GlcNAc...) asparagine" evidence="2">
    <location>
        <position position="554"/>
    </location>
</feature>
<feature type="glycosylation site" description="N-linked (GlcNAc...) asparagine" evidence="2">
    <location>
        <position position="590"/>
    </location>
</feature>
<feature type="glycosylation site" description="N-linked (GlcNAc...) asparagine" evidence="2">
    <location>
        <position position="605"/>
    </location>
</feature>
<feature type="glycosylation site" description="N-linked (GlcNAc...) asparagine" evidence="2">
    <location>
        <position position="743"/>
    </location>
</feature>
<feature type="glycosylation site" description="N-linked (GlcNAc...) asparagine" evidence="2">
    <location>
        <position position="759"/>
    </location>
</feature>
<feature type="glycosylation site" description="N-linked (GlcNAc...) asparagine" evidence="2">
    <location>
        <position position="791"/>
    </location>
</feature>
<feature type="glycosylation site" description="N-linked (GlcNAc...) asparagine" evidence="2">
    <location>
        <position position="811"/>
    </location>
</feature>
<protein>
    <recommendedName>
        <fullName evidence="3">Receptor-like protein 50</fullName>
        <shortName evidence="3">AtRLP50</shortName>
    </recommendedName>
</protein>
<evidence type="ECO:0000255" key="1"/>
<evidence type="ECO:0000255" key="2">
    <source>
        <dbReference type="PROSITE-ProRule" id="PRU00498"/>
    </source>
</evidence>
<evidence type="ECO:0000303" key="3">
    <source>
    </source>
</evidence>
<evidence type="ECO:0000305" key="4"/>
<evidence type="ECO:0000312" key="5">
    <source>
        <dbReference type="Araport" id="AT4G13920"/>
    </source>
</evidence>
<evidence type="ECO:0000312" key="6">
    <source>
        <dbReference type="EMBL" id="CAB10171.1"/>
    </source>
</evidence>
<evidence type="ECO:0000312" key="7">
    <source>
        <dbReference type="EMBL" id="CAB78434.1"/>
    </source>
</evidence>
<gene>
    <name evidence="3" type="primary">RLP50</name>
    <name evidence="5" type="ordered locus">At4g13920</name>
    <name evidence="6" type="ORF">Dl3000W</name>
    <name evidence="7" type="ORF">FCAALL.223</name>
</gene>
<accession>Q93YT3</accession>
<accession>O23253</accession>
<sequence length="891" mass="98334">MITIIWSLCLIFCLSNSILVIAKDLCLPDQRDALLEFKNEFSIPSPDSDLMLILQTTAKWRNNTDCCSWGGISCDPKTGVVVELDLGNSDLNGRLRSNSSLFRLQHLQSLDLSYNDLSCTLPDSSGNFKYLRVLNLLGCNLFGEIPTSLRSLSYLTDLDLSYNDDLTGEILDSMGNLKHLRVLSLTSCKFTGKIPSSLGNLTYLTDLDLSWNYFTGELPDSMGNLKSLRVLNLHRCNFFGKIPTSLGSLSNLTDLDISKNEFTSEGPDSMSSLNRLTDFQLMLLNLSSLTNVDLSSNQFKAMLPSNMSSLSKLEAFDISGNSFSGTIPSSLFMLPSLIKLDLGTNDFSGPLKIGNISSPSNLQELYIGENNINGPIPRSILKLVGLSALSLSFWDTGGIVDFSIFLQLKSLRSLDLSGINLNISSSHHLPSHMMHLILSSCNISQFPKFLENQTSLYHLDISANQIEGQVPEWLWRLPTLRYVNIAQNAFSGELTMLPNPIYSFIASDNKFSGEIPRAVCEIGTLVLSNNNFSGSIPPCFEISNKTLSILHLRNNSLSGVIPEESLHGYLRSLDVGSNRLSGQFPKSLINCSYLQFLNVEENRINDTFPSWLKSLPNLQLLVLRSNEFHGPIFSPGDSLSFSKLRFFDISENRFSGVLPSDYFVGWSVMSSFVDIIDNTPGFTVVGDDQESFHKSVVLTIKGLNMELVGSGFEIYKTIDVSGNRLEGDIPESIGILKELIVLNMSNNAFTGHIPPSLSNLSNLQSLDLSQNRLSGSIPGELGELTFLARMNFSYNMLEGPIPQGTQIQSQNSSSFAENPGLCGAPLQKKCGGEEEEDKEKEEKDKGLSWVAAAIGYVPGLFCGLAIGHILTSYKRDWFMRIFSCFSSPLKK</sequence>